<proteinExistence type="inferred from homology"/>
<feature type="chain" id="PRO_0000435455" description="Olfactory receptor 13C7">
    <location>
        <begin position="1"/>
        <end position="318"/>
    </location>
</feature>
<feature type="topological domain" description="Extracellular" evidence="4">
    <location>
        <begin position="1"/>
        <end position="27"/>
    </location>
</feature>
<feature type="transmembrane region" description="Helical; Name=1" evidence="1">
    <location>
        <begin position="28"/>
        <end position="48"/>
    </location>
</feature>
<feature type="topological domain" description="Cytoplasmic" evidence="4">
    <location>
        <begin position="49"/>
        <end position="61"/>
    </location>
</feature>
<feature type="transmembrane region" description="Helical; Name=2" evidence="1">
    <location>
        <begin position="62"/>
        <end position="82"/>
    </location>
</feature>
<feature type="topological domain" description="Extracellular" evidence="4">
    <location>
        <begin position="83"/>
        <end position="100"/>
    </location>
</feature>
<feature type="transmembrane region" description="Helical; Name=3" evidence="1">
    <location>
        <begin position="101"/>
        <end position="121"/>
    </location>
</feature>
<feature type="topological domain" description="Cytoplasmic" evidence="4">
    <location>
        <begin position="122"/>
        <end position="181"/>
    </location>
</feature>
<feature type="transmembrane region" description="Helical; Name=4" evidence="1">
    <location>
        <begin position="182"/>
        <end position="202"/>
    </location>
</feature>
<feature type="topological domain" description="Extracellular" evidence="4">
    <location>
        <begin position="203"/>
        <end position="205"/>
    </location>
</feature>
<feature type="transmembrane region" description="Helical; Name=5" evidence="1">
    <location>
        <begin position="206"/>
        <end position="226"/>
    </location>
</feature>
<feature type="topological domain" description="Cytoplasmic" evidence="4">
    <location>
        <begin position="227"/>
        <end position="238"/>
    </location>
</feature>
<feature type="transmembrane region" description="Helical; Name=6" evidence="1">
    <location>
        <begin position="239"/>
        <end position="259"/>
    </location>
</feature>
<feature type="topological domain" description="Extracellular" evidence="4">
    <location>
        <begin position="260"/>
        <end position="278"/>
    </location>
</feature>
<feature type="transmembrane region" description="Helical; Name=7" evidence="1">
    <location>
        <begin position="279"/>
        <end position="289"/>
    </location>
</feature>
<feature type="topological domain" description="Cytoplasmic" evidence="4">
    <location>
        <begin position="290"/>
        <end position="318"/>
    </location>
</feature>
<reference key="1">
    <citation type="journal article" date="2004" name="Nature">
        <title>DNA sequence and analysis of human chromosome 9.</title>
        <authorList>
            <person name="Humphray S.J."/>
            <person name="Oliver K."/>
            <person name="Hunt A.R."/>
            <person name="Plumb R.W."/>
            <person name="Loveland J.E."/>
            <person name="Howe K.L."/>
            <person name="Andrews T.D."/>
            <person name="Searle S."/>
            <person name="Hunt S.E."/>
            <person name="Scott C.E."/>
            <person name="Jones M.C."/>
            <person name="Ainscough R."/>
            <person name="Almeida J.P."/>
            <person name="Ambrose K.D."/>
            <person name="Ashwell R.I.S."/>
            <person name="Babbage A.K."/>
            <person name="Babbage S."/>
            <person name="Bagguley C.L."/>
            <person name="Bailey J."/>
            <person name="Banerjee R."/>
            <person name="Barker D.J."/>
            <person name="Barlow K.F."/>
            <person name="Bates K."/>
            <person name="Beasley H."/>
            <person name="Beasley O."/>
            <person name="Bird C.P."/>
            <person name="Bray-Allen S."/>
            <person name="Brown A.J."/>
            <person name="Brown J.Y."/>
            <person name="Burford D."/>
            <person name="Burrill W."/>
            <person name="Burton J."/>
            <person name="Carder C."/>
            <person name="Carter N.P."/>
            <person name="Chapman J.C."/>
            <person name="Chen Y."/>
            <person name="Clarke G."/>
            <person name="Clark S.Y."/>
            <person name="Clee C.M."/>
            <person name="Clegg S."/>
            <person name="Collier R.E."/>
            <person name="Corby N."/>
            <person name="Crosier M."/>
            <person name="Cummings A.T."/>
            <person name="Davies J."/>
            <person name="Dhami P."/>
            <person name="Dunn M."/>
            <person name="Dutta I."/>
            <person name="Dyer L.W."/>
            <person name="Earthrowl M.E."/>
            <person name="Faulkner L."/>
            <person name="Fleming C.J."/>
            <person name="Frankish A."/>
            <person name="Frankland J.A."/>
            <person name="French L."/>
            <person name="Fricker D.G."/>
            <person name="Garner P."/>
            <person name="Garnett J."/>
            <person name="Ghori J."/>
            <person name="Gilbert J.G.R."/>
            <person name="Glison C."/>
            <person name="Grafham D.V."/>
            <person name="Gribble S."/>
            <person name="Griffiths C."/>
            <person name="Griffiths-Jones S."/>
            <person name="Grocock R."/>
            <person name="Guy J."/>
            <person name="Hall R.E."/>
            <person name="Hammond S."/>
            <person name="Harley J.L."/>
            <person name="Harrison E.S.I."/>
            <person name="Hart E.A."/>
            <person name="Heath P.D."/>
            <person name="Henderson C.D."/>
            <person name="Hopkins B.L."/>
            <person name="Howard P.J."/>
            <person name="Howden P.J."/>
            <person name="Huckle E."/>
            <person name="Johnson C."/>
            <person name="Johnson D."/>
            <person name="Joy A.A."/>
            <person name="Kay M."/>
            <person name="Keenan S."/>
            <person name="Kershaw J.K."/>
            <person name="Kimberley A.M."/>
            <person name="King A."/>
            <person name="Knights A."/>
            <person name="Laird G.K."/>
            <person name="Langford C."/>
            <person name="Lawlor S."/>
            <person name="Leongamornlert D.A."/>
            <person name="Leversha M."/>
            <person name="Lloyd C."/>
            <person name="Lloyd D.M."/>
            <person name="Lovell J."/>
            <person name="Martin S."/>
            <person name="Mashreghi-Mohammadi M."/>
            <person name="Matthews L."/>
            <person name="McLaren S."/>
            <person name="McLay K.E."/>
            <person name="McMurray A."/>
            <person name="Milne S."/>
            <person name="Nickerson T."/>
            <person name="Nisbett J."/>
            <person name="Nordsiek G."/>
            <person name="Pearce A.V."/>
            <person name="Peck A.I."/>
            <person name="Porter K.M."/>
            <person name="Pandian R."/>
            <person name="Pelan S."/>
            <person name="Phillimore B."/>
            <person name="Povey S."/>
            <person name="Ramsey Y."/>
            <person name="Rand V."/>
            <person name="Scharfe M."/>
            <person name="Sehra H.K."/>
            <person name="Shownkeen R."/>
            <person name="Sims S.K."/>
            <person name="Skuce C.D."/>
            <person name="Smith M."/>
            <person name="Steward C.A."/>
            <person name="Swarbreck D."/>
            <person name="Sycamore N."/>
            <person name="Tester J."/>
            <person name="Thorpe A."/>
            <person name="Tracey A."/>
            <person name="Tromans A."/>
            <person name="Thomas D.W."/>
            <person name="Wall M."/>
            <person name="Wallis J.M."/>
            <person name="West A.P."/>
            <person name="Whitehead S.L."/>
            <person name="Willey D.L."/>
            <person name="Williams S.A."/>
            <person name="Wilming L."/>
            <person name="Wray P.W."/>
            <person name="Young L."/>
            <person name="Ashurst J.L."/>
            <person name="Coulson A."/>
            <person name="Blocker H."/>
            <person name="Durbin R.M."/>
            <person name="Sulston J.E."/>
            <person name="Hubbard T."/>
            <person name="Jackson M.J."/>
            <person name="Bentley D.R."/>
            <person name="Beck S."/>
            <person name="Rogers J."/>
            <person name="Dunham I."/>
        </authorList>
    </citation>
    <scope>NUCLEOTIDE SEQUENCE [LARGE SCALE GENOMIC DNA]</scope>
</reference>
<reference key="2">
    <citation type="journal article" date="2012" name="BMC Genomics">
        <title>Personal receptor repertoires: olfaction as a model.</title>
        <authorList>
            <person name="Olender T."/>
            <person name="Waszak S.M."/>
            <person name="Viavant M."/>
            <person name="Khen M."/>
            <person name="Ben-Asher E."/>
            <person name="Reyes A."/>
            <person name="Nativ N."/>
            <person name="Wysocki C.J."/>
            <person name="Ge D."/>
            <person name="Lancet D."/>
        </authorList>
    </citation>
    <scope>POLYMORPHISM</scope>
</reference>
<dbReference type="EMBL" id="AL138834">
    <property type="status" value="NOT_ANNOTATED_CDS"/>
    <property type="molecule type" value="Genomic_DNA"/>
</dbReference>
<dbReference type="SMR" id="P0DN81"/>
<dbReference type="FunCoup" id="P0DN81">
    <property type="interactions" value="786"/>
</dbReference>
<dbReference type="GlyGen" id="P0DN81">
    <property type="glycosylation" value="1 site, 1 O-linked glycan (1 site)"/>
</dbReference>
<dbReference type="BioMuta" id="OR13C7"/>
<dbReference type="MassIVE" id="P0DN81"/>
<dbReference type="AGR" id="HGNC:15102"/>
<dbReference type="GeneCards" id="OR13C7"/>
<dbReference type="HGNC" id="HGNC:15102">
    <property type="gene designation" value="OR13C7"/>
</dbReference>
<dbReference type="neXtProt" id="NX_P0DN81"/>
<dbReference type="InParanoid" id="P0DN81"/>
<dbReference type="OrthoDB" id="6144223at2759"/>
<dbReference type="PAN-GO" id="P0DN81">
    <property type="GO annotations" value="0 GO annotations based on evolutionary models"/>
</dbReference>
<dbReference type="Pharos" id="P0DN81">
    <property type="development level" value="Tdark"/>
</dbReference>
<dbReference type="PRO" id="PR:P0DN81"/>
<dbReference type="Proteomes" id="UP000005640">
    <property type="component" value="Unplaced"/>
</dbReference>
<dbReference type="RNAct" id="P0DN81">
    <property type="molecule type" value="protein"/>
</dbReference>
<dbReference type="GO" id="GO:0005886">
    <property type="term" value="C:plasma membrane"/>
    <property type="evidence" value="ECO:0000318"/>
    <property type="project" value="GO_Central"/>
</dbReference>
<dbReference type="GO" id="GO:0004930">
    <property type="term" value="F:G protein-coupled receptor activity"/>
    <property type="evidence" value="ECO:0007669"/>
    <property type="project" value="InterPro"/>
</dbReference>
<dbReference type="GO" id="GO:0004984">
    <property type="term" value="F:olfactory receptor activity"/>
    <property type="evidence" value="ECO:0000318"/>
    <property type="project" value="GO_Central"/>
</dbReference>
<dbReference type="GO" id="GO:0050911">
    <property type="term" value="P:detection of chemical stimulus involved in sensory perception of smell"/>
    <property type="evidence" value="ECO:0000318"/>
    <property type="project" value="GO_Central"/>
</dbReference>
<dbReference type="CDD" id="cd15430">
    <property type="entry name" value="7tmA_OR13-like"/>
    <property type="match status" value="1"/>
</dbReference>
<dbReference type="FunFam" id="1.20.1070.10:FF:000501">
    <property type="entry name" value="Olfactory receptor"/>
    <property type="match status" value="1"/>
</dbReference>
<dbReference type="Gene3D" id="1.20.1070.10">
    <property type="entry name" value="Rhodopsin 7-helix transmembrane proteins"/>
    <property type="match status" value="1"/>
</dbReference>
<dbReference type="InterPro" id="IPR000276">
    <property type="entry name" value="GPCR_Rhodpsn"/>
</dbReference>
<dbReference type="InterPro" id="IPR017452">
    <property type="entry name" value="GPCR_Rhodpsn_7TM"/>
</dbReference>
<dbReference type="InterPro" id="IPR000725">
    <property type="entry name" value="Olfact_rcpt"/>
</dbReference>
<dbReference type="PANTHER" id="PTHR26453">
    <property type="entry name" value="OLFACTORY RECEPTOR"/>
    <property type="match status" value="1"/>
</dbReference>
<dbReference type="Pfam" id="PF13853">
    <property type="entry name" value="7tm_4"/>
    <property type="match status" value="1"/>
</dbReference>
<dbReference type="PRINTS" id="PR00237">
    <property type="entry name" value="GPCRRHODOPSN"/>
</dbReference>
<dbReference type="PRINTS" id="PR00245">
    <property type="entry name" value="OLFACTORYR"/>
</dbReference>
<dbReference type="SUPFAM" id="SSF81321">
    <property type="entry name" value="Family A G protein-coupled receptor-like"/>
    <property type="match status" value="1"/>
</dbReference>
<dbReference type="PROSITE" id="PS00237">
    <property type="entry name" value="G_PROTEIN_RECEP_F1_1"/>
    <property type="match status" value="1"/>
</dbReference>
<dbReference type="PROSITE" id="PS50262">
    <property type="entry name" value="G_PROTEIN_RECEP_F1_2"/>
    <property type="match status" value="1"/>
</dbReference>
<evidence type="ECO:0000255" key="1"/>
<evidence type="ECO:0000255" key="2">
    <source>
        <dbReference type="PROSITE-ProRule" id="PRU00521"/>
    </source>
</evidence>
<evidence type="ECO:0000269" key="3">
    <source>
    </source>
</evidence>
<evidence type="ECO:0000305" key="4"/>
<evidence type="ECO:0000312" key="5">
    <source>
        <dbReference type="HGNC" id="HGNC:15102"/>
    </source>
</evidence>
<gene>
    <name evidence="5" type="primary">OR13C7</name>
    <name type="synonym">OR13C7P</name>
</gene>
<comment type="function">
    <text evidence="4">Odorant receptor.</text>
</comment>
<comment type="subcellular location">
    <subcellularLocation>
        <location evidence="4">Cell membrane</location>
        <topology evidence="1">Multi-pass membrane protein</topology>
    </subcellularLocation>
</comment>
<comment type="polymorphism">
    <text evidence="3">Segregating pseudogene, locus showing both intact and pseudogene forms in the population. A double nucleotide deletion at position Pro-144 in the gene coding for this protein is responsible for functional diversity, producing a pseudogene.</text>
</comment>
<comment type="similarity">
    <text evidence="2">Belongs to the G-protein coupled receptor 1 family.</text>
</comment>
<comment type="online information" name="Human Olfactory Receptor Data Exploratorium (HORDE)">
    <link uri="http://genome.weizmann.ac.il/horde/card/index/symbol:OR13C7P"/>
</comment>
<sequence>MVSANQTASVTEFILLGLSAHPKLEKTFFVLILLMYLVILLGNGVLILMTVSNSHLHMPMYFFLGNLSFLDICYTTSSVPLILDSFLTPRKTISFSACAVQMFLSFAMGATECVLLSMMAFDRYVAICNPLRYPVVMSKAAYMPKAAGSWVAGSTASMVQTSLAMRLPFCGDNIINHFTCEILAVLKLACADISVNVISMGVTNVIFLGVPVLFISFSYVFIIATILRIPSAEGRKKAFSTCSAHLTVVVIFYGTILFMYGKPKSKDPLGADKQDLADKLISLFYGVVTPMLNPIIYSLRNKDVKAAVRDLIFQKCFA</sequence>
<protein>
    <recommendedName>
        <fullName>Olfactory receptor 13C7</fullName>
    </recommendedName>
</protein>
<name>O13C7_HUMAN</name>
<keyword id="KW-1003">Cell membrane</keyword>
<keyword id="KW-0472">Membrane</keyword>
<keyword id="KW-0552">Olfaction</keyword>
<keyword id="KW-1185">Reference proteome</keyword>
<keyword id="KW-0716">Sensory transduction</keyword>
<keyword id="KW-0807">Transducer</keyword>
<keyword id="KW-0812">Transmembrane</keyword>
<keyword id="KW-1133">Transmembrane helix</keyword>
<organism>
    <name type="scientific">Homo sapiens</name>
    <name type="common">Human</name>
    <dbReference type="NCBI Taxonomy" id="9606"/>
    <lineage>
        <taxon>Eukaryota</taxon>
        <taxon>Metazoa</taxon>
        <taxon>Chordata</taxon>
        <taxon>Craniata</taxon>
        <taxon>Vertebrata</taxon>
        <taxon>Euteleostomi</taxon>
        <taxon>Mammalia</taxon>
        <taxon>Eutheria</taxon>
        <taxon>Euarchontoglires</taxon>
        <taxon>Primates</taxon>
        <taxon>Haplorrhini</taxon>
        <taxon>Catarrhini</taxon>
        <taxon>Hominidae</taxon>
        <taxon>Homo</taxon>
    </lineage>
</organism>
<accession>P0DN81</accession>